<protein>
    <recommendedName>
        <fullName evidence="1">Bis(5'-nucleosyl)-tetraphosphatase, symmetrical</fullName>
        <ecNumber evidence="1">3.6.1.41</ecNumber>
    </recommendedName>
    <alternativeName>
        <fullName evidence="1">Ap4A hydrolase</fullName>
    </alternativeName>
    <alternativeName>
        <fullName evidence="1">Diadenosine 5',5'''-P1,P4-tetraphosphate pyrophosphohydrolase</fullName>
    </alternativeName>
    <alternativeName>
        <fullName evidence="1">Diadenosine tetraphosphatase</fullName>
    </alternativeName>
</protein>
<keyword id="KW-0378">Hydrolase</keyword>
<organism>
    <name type="scientific">Histophilus somni (strain 129Pt)</name>
    <name type="common">Haemophilus somnus</name>
    <dbReference type="NCBI Taxonomy" id="205914"/>
    <lineage>
        <taxon>Bacteria</taxon>
        <taxon>Pseudomonadati</taxon>
        <taxon>Pseudomonadota</taxon>
        <taxon>Gammaproteobacteria</taxon>
        <taxon>Pasteurellales</taxon>
        <taxon>Pasteurellaceae</taxon>
        <taxon>Histophilus</taxon>
    </lineage>
</organism>
<comment type="function">
    <text evidence="1">Hydrolyzes diadenosine 5',5'''-P1,P4-tetraphosphate to yield ADP.</text>
</comment>
<comment type="catalytic activity">
    <reaction evidence="1">
        <text>P(1),P(4)-bis(5'-adenosyl) tetraphosphate + H2O = 2 ADP + 2 H(+)</text>
        <dbReference type="Rhea" id="RHEA:24252"/>
        <dbReference type="ChEBI" id="CHEBI:15377"/>
        <dbReference type="ChEBI" id="CHEBI:15378"/>
        <dbReference type="ChEBI" id="CHEBI:58141"/>
        <dbReference type="ChEBI" id="CHEBI:456216"/>
        <dbReference type="EC" id="3.6.1.41"/>
    </reaction>
</comment>
<comment type="similarity">
    <text evidence="1">Belongs to the Ap4A hydrolase family.</text>
</comment>
<evidence type="ECO:0000255" key="1">
    <source>
        <dbReference type="HAMAP-Rule" id="MF_00199"/>
    </source>
</evidence>
<feature type="chain" id="PRO_1000012064" description="Bis(5'-nucleosyl)-tetraphosphatase, symmetrical">
    <location>
        <begin position="1"/>
        <end position="273"/>
    </location>
</feature>
<dbReference type="EC" id="3.6.1.41" evidence="1"/>
<dbReference type="EMBL" id="CP000436">
    <property type="protein sequence ID" value="ABI25826.1"/>
    <property type="molecule type" value="Genomic_DNA"/>
</dbReference>
<dbReference type="SMR" id="Q0I5C4"/>
<dbReference type="KEGG" id="hso:HS_1558"/>
<dbReference type="eggNOG" id="COG0639">
    <property type="taxonomic scope" value="Bacteria"/>
</dbReference>
<dbReference type="HOGENOM" id="CLU_056184_2_0_6"/>
<dbReference type="GO" id="GO:0008803">
    <property type="term" value="F:bis(5'-nucleosyl)-tetraphosphatase (symmetrical) activity"/>
    <property type="evidence" value="ECO:0007669"/>
    <property type="project" value="UniProtKB-UniRule"/>
</dbReference>
<dbReference type="CDD" id="cd07422">
    <property type="entry name" value="MPP_ApaH"/>
    <property type="match status" value="1"/>
</dbReference>
<dbReference type="Gene3D" id="3.60.21.10">
    <property type="match status" value="1"/>
</dbReference>
<dbReference type="HAMAP" id="MF_00199">
    <property type="entry name" value="ApaH"/>
    <property type="match status" value="1"/>
</dbReference>
<dbReference type="InterPro" id="IPR004617">
    <property type="entry name" value="ApaH"/>
</dbReference>
<dbReference type="InterPro" id="IPR004843">
    <property type="entry name" value="Calcineurin-like_PHP_ApaH"/>
</dbReference>
<dbReference type="InterPro" id="IPR029052">
    <property type="entry name" value="Metallo-depent_PP-like"/>
</dbReference>
<dbReference type="NCBIfam" id="TIGR00668">
    <property type="entry name" value="apaH"/>
    <property type="match status" value="1"/>
</dbReference>
<dbReference type="NCBIfam" id="NF001204">
    <property type="entry name" value="PRK00166.1"/>
    <property type="match status" value="1"/>
</dbReference>
<dbReference type="PANTHER" id="PTHR40942">
    <property type="match status" value="1"/>
</dbReference>
<dbReference type="PANTHER" id="PTHR40942:SF4">
    <property type="entry name" value="CYTOCHROME C5"/>
    <property type="match status" value="1"/>
</dbReference>
<dbReference type="Pfam" id="PF00149">
    <property type="entry name" value="Metallophos"/>
    <property type="match status" value="1"/>
</dbReference>
<dbReference type="PIRSF" id="PIRSF000903">
    <property type="entry name" value="B5n-ttraPtase_sm"/>
    <property type="match status" value="1"/>
</dbReference>
<dbReference type="SUPFAM" id="SSF56300">
    <property type="entry name" value="Metallo-dependent phosphatases"/>
    <property type="match status" value="1"/>
</dbReference>
<accession>Q0I5C4</accession>
<sequence length="273" mass="31455">MATYLVGDLQGCYDELQLLLETVQFNPVQDKLYLVGDLVARGDKSLECLRFVKSLGAAAQMVLGNHDLHLISTALGIKKVSLQDHVEAIFTAPDFVELIDWLRHQPLLVHDEKCDFVMSHAGISPDWDLDTAKSCAREVENELQHGDYHYLISNMYDNQPDRWSADLQGLQRLRYSINVFTRMRFCYRDHRLDFACKASVEKASQELIPWFNLDNPLFKVQNLVFGHWASLVDTPTPANIYALDTGCVWGNRMTMLRWEDKQYFVQGALKDYF</sequence>
<proteinExistence type="inferred from homology"/>
<name>APAH_HISS1</name>
<gene>
    <name evidence="1" type="primary">apaH</name>
    <name type="ordered locus">HS_1558</name>
</gene>
<reference key="1">
    <citation type="journal article" date="2007" name="J. Bacteriol.">
        <title>Complete genome sequence of Haemophilus somnus (Histophilus somni) strain 129Pt and comparison to Haemophilus ducreyi 35000HP and Haemophilus influenzae Rd.</title>
        <authorList>
            <person name="Challacombe J.F."/>
            <person name="Duncan A.J."/>
            <person name="Brettin T.S."/>
            <person name="Bruce D."/>
            <person name="Chertkov O."/>
            <person name="Detter J.C."/>
            <person name="Han C.S."/>
            <person name="Misra M."/>
            <person name="Richardson P."/>
            <person name="Tapia R."/>
            <person name="Thayer N."/>
            <person name="Xie G."/>
            <person name="Inzana T.J."/>
        </authorList>
    </citation>
    <scope>NUCLEOTIDE SEQUENCE [LARGE SCALE GENOMIC DNA]</scope>
    <source>
        <strain>129Pt</strain>
    </source>
</reference>